<evidence type="ECO:0000255" key="1">
    <source>
        <dbReference type="HAMAP-Rule" id="MF_00051"/>
    </source>
</evidence>
<sequence>MIDNILFDLIEREAKRERENIELIASENFVSSDVRQAVGSVLTNKYAEGYPSKRYYGGCSVVDDIENLAISRAMELFGASYANVQPHSGSQANMAAIMSLIKPGDKILGMELSHGGHLTHGSKVSFSGMFFDAYSYGVSRDSEMIDYDDVKNIAKACRPNLIIAGASSYSREIDFKKFREIANEVSAYLLCDIAHTAGLVATGFHNSPIDVAHLTTSTTHKTLRGPRGGLILAGKEFNTMINYNNKERTLDSAVNSCVFPGTQGGPLMHVIAGKAVAFKEALNKEFKDYISRVIENTKAMAEYFISEGLRIVSGGTDNHLFLVDLSGLGITGADAEKILESVNITLNKNAIPFDSKNPSVASGIRIGAPAITSRGLNRDDSIKVAHFIIRALKTKSTDELRKIKQEVIGFISSFDMP</sequence>
<name>GLYA_BORDL</name>
<gene>
    <name evidence="1" type="primary">glyA</name>
    <name type="ordered locus">BDU_602</name>
</gene>
<comment type="function">
    <text evidence="1">Catalyzes the reversible interconversion of serine and glycine with tetrahydrofolate (THF) serving as the one-carbon carrier. This reaction serves as the major source of one-carbon groups required for the biosynthesis of purines, thymidylate, methionine, and other important biomolecules. Also exhibits THF-independent aldolase activity toward beta-hydroxyamino acids, producing glycine and aldehydes, via a retro-aldol mechanism.</text>
</comment>
<comment type="catalytic activity">
    <reaction evidence="1">
        <text>(6R)-5,10-methylene-5,6,7,8-tetrahydrofolate + glycine + H2O = (6S)-5,6,7,8-tetrahydrofolate + L-serine</text>
        <dbReference type="Rhea" id="RHEA:15481"/>
        <dbReference type="ChEBI" id="CHEBI:15377"/>
        <dbReference type="ChEBI" id="CHEBI:15636"/>
        <dbReference type="ChEBI" id="CHEBI:33384"/>
        <dbReference type="ChEBI" id="CHEBI:57305"/>
        <dbReference type="ChEBI" id="CHEBI:57453"/>
        <dbReference type="EC" id="2.1.2.1"/>
    </reaction>
</comment>
<comment type="cofactor">
    <cofactor evidence="1">
        <name>pyridoxal 5'-phosphate</name>
        <dbReference type="ChEBI" id="CHEBI:597326"/>
    </cofactor>
</comment>
<comment type="pathway">
    <text evidence="1">One-carbon metabolism; tetrahydrofolate interconversion.</text>
</comment>
<comment type="pathway">
    <text evidence="1">Amino-acid biosynthesis; glycine biosynthesis; glycine from L-serine: step 1/1.</text>
</comment>
<comment type="subunit">
    <text evidence="1">Homodimer.</text>
</comment>
<comment type="subcellular location">
    <subcellularLocation>
        <location evidence="1">Cytoplasm</location>
    </subcellularLocation>
</comment>
<comment type="similarity">
    <text evidence="1">Belongs to the SHMT family.</text>
</comment>
<accession>B5RMF3</accession>
<dbReference type="EC" id="2.1.2.1" evidence="1"/>
<dbReference type="EMBL" id="CP000976">
    <property type="protein sequence ID" value="ACH93539.1"/>
    <property type="molecule type" value="Genomic_DNA"/>
</dbReference>
<dbReference type="RefSeq" id="WP_012538348.1">
    <property type="nucleotide sequence ID" value="NC_011229.1"/>
</dbReference>
<dbReference type="SMR" id="B5RMF3"/>
<dbReference type="STRING" id="412419.BDU_602"/>
<dbReference type="KEGG" id="bdu:BDU_602"/>
<dbReference type="eggNOG" id="COG0112">
    <property type="taxonomic scope" value="Bacteria"/>
</dbReference>
<dbReference type="HOGENOM" id="CLU_022477_2_1_12"/>
<dbReference type="OrthoDB" id="9803846at2"/>
<dbReference type="UniPathway" id="UPA00193"/>
<dbReference type="UniPathway" id="UPA00288">
    <property type="reaction ID" value="UER01023"/>
</dbReference>
<dbReference type="Proteomes" id="UP000000611">
    <property type="component" value="Chromosome"/>
</dbReference>
<dbReference type="GO" id="GO:0005829">
    <property type="term" value="C:cytosol"/>
    <property type="evidence" value="ECO:0007669"/>
    <property type="project" value="TreeGrafter"/>
</dbReference>
<dbReference type="GO" id="GO:0004372">
    <property type="term" value="F:glycine hydroxymethyltransferase activity"/>
    <property type="evidence" value="ECO:0007669"/>
    <property type="project" value="UniProtKB-UniRule"/>
</dbReference>
<dbReference type="GO" id="GO:0030170">
    <property type="term" value="F:pyridoxal phosphate binding"/>
    <property type="evidence" value="ECO:0007669"/>
    <property type="project" value="UniProtKB-UniRule"/>
</dbReference>
<dbReference type="GO" id="GO:0019264">
    <property type="term" value="P:glycine biosynthetic process from serine"/>
    <property type="evidence" value="ECO:0007669"/>
    <property type="project" value="UniProtKB-UniRule"/>
</dbReference>
<dbReference type="GO" id="GO:0035999">
    <property type="term" value="P:tetrahydrofolate interconversion"/>
    <property type="evidence" value="ECO:0007669"/>
    <property type="project" value="UniProtKB-UniRule"/>
</dbReference>
<dbReference type="CDD" id="cd00378">
    <property type="entry name" value="SHMT"/>
    <property type="match status" value="1"/>
</dbReference>
<dbReference type="FunFam" id="3.40.640.10:FF:000001">
    <property type="entry name" value="Serine hydroxymethyltransferase"/>
    <property type="match status" value="1"/>
</dbReference>
<dbReference type="Gene3D" id="3.90.1150.10">
    <property type="entry name" value="Aspartate Aminotransferase, domain 1"/>
    <property type="match status" value="1"/>
</dbReference>
<dbReference type="Gene3D" id="3.40.640.10">
    <property type="entry name" value="Type I PLP-dependent aspartate aminotransferase-like (Major domain)"/>
    <property type="match status" value="1"/>
</dbReference>
<dbReference type="HAMAP" id="MF_00051">
    <property type="entry name" value="SHMT"/>
    <property type="match status" value="1"/>
</dbReference>
<dbReference type="InterPro" id="IPR015424">
    <property type="entry name" value="PyrdxlP-dep_Trfase"/>
</dbReference>
<dbReference type="InterPro" id="IPR015421">
    <property type="entry name" value="PyrdxlP-dep_Trfase_major"/>
</dbReference>
<dbReference type="InterPro" id="IPR015422">
    <property type="entry name" value="PyrdxlP-dep_Trfase_small"/>
</dbReference>
<dbReference type="InterPro" id="IPR001085">
    <property type="entry name" value="Ser_HO-MeTrfase"/>
</dbReference>
<dbReference type="InterPro" id="IPR049943">
    <property type="entry name" value="Ser_HO-MeTrfase-like"/>
</dbReference>
<dbReference type="InterPro" id="IPR019798">
    <property type="entry name" value="Ser_HO-MeTrfase_PLP_BS"/>
</dbReference>
<dbReference type="InterPro" id="IPR039429">
    <property type="entry name" value="SHMT-like_dom"/>
</dbReference>
<dbReference type="NCBIfam" id="NF000586">
    <property type="entry name" value="PRK00011.1"/>
    <property type="match status" value="1"/>
</dbReference>
<dbReference type="PANTHER" id="PTHR11680">
    <property type="entry name" value="SERINE HYDROXYMETHYLTRANSFERASE"/>
    <property type="match status" value="1"/>
</dbReference>
<dbReference type="PANTHER" id="PTHR11680:SF35">
    <property type="entry name" value="SERINE HYDROXYMETHYLTRANSFERASE 1"/>
    <property type="match status" value="1"/>
</dbReference>
<dbReference type="Pfam" id="PF00464">
    <property type="entry name" value="SHMT"/>
    <property type="match status" value="1"/>
</dbReference>
<dbReference type="PIRSF" id="PIRSF000412">
    <property type="entry name" value="SHMT"/>
    <property type="match status" value="1"/>
</dbReference>
<dbReference type="SUPFAM" id="SSF53383">
    <property type="entry name" value="PLP-dependent transferases"/>
    <property type="match status" value="1"/>
</dbReference>
<dbReference type="PROSITE" id="PS00096">
    <property type="entry name" value="SHMT"/>
    <property type="match status" value="1"/>
</dbReference>
<reference key="1">
    <citation type="journal article" date="2008" name="PLoS Genet.">
        <title>The genome of Borrelia recurrentis, the agent of deadly louse-borne relapsing fever, is a degraded subset of tick-borne Borrelia duttonii.</title>
        <authorList>
            <person name="Lescot M."/>
            <person name="Audic S."/>
            <person name="Robert C."/>
            <person name="Nguyen T.T."/>
            <person name="Blanc G."/>
            <person name="Cutler S.J."/>
            <person name="Wincker P."/>
            <person name="Couloux A."/>
            <person name="Claverie J.-M."/>
            <person name="Raoult D."/>
            <person name="Drancourt M."/>
        </authorList>
    </citation>
    <scope>NUCLEOTIDE SEQUENCE [LARGE SCALE GENOMIC DNA]</scope>
    <source>
        <strain>Ly</strain>
    </source>
</reference>
<protein>
    <recommendedName>
        <fullName evidence="1">Serine hydroxymethyltransferase</fullName>
        <shortName evidence="1">SHMT</shortName>
        <shortName evidence="1">Serine methylase</shortName>
        <ecNumber evidence="1">2.1.2.1</ecNumber>
    </recommendedName>
</protein>
<proteinExistence type="inferred from homology"/>
<organism>
    <name type="scientific">Borrelia duttonii (strain Ly)</name>
    <dbReference type="NCBI Taxonomy" id="412419"/>
    <lineage>
        <taxon>Bacteria</taxon>
        <taxon>Pseudomonadati</taxon>
        <taxon>Spirochaetota</taxon>
        <taxon>Spirochaetia</taxon>
        <taxon>Spirochaetales</taxon>
        <taxon>Borreliaceae</taxon>
        <taxon>Borrelia</taxon>
    </lineage>
</organism>
<keyword id="KW-0028">Amino-acid biosynthesis</keyword>
<keyword id="KW-0963">Cytoplasm</keyword>
<keyword id="KW-0554">One-carbon metabolism</keyword>
<keyword id="KW-0663">Pyridoxal phosphate</keyword>
<keyword id="KW-0808">Transferase</keyword>
<feature type="chain" id="PRO_1000091519" description="Serine hydroxymethyltransferase">
    <location>
        <begin position="1"/>
        <end position="417"/>
    </location>
</feature>
<feature type="binding site" evidence="1">
    <location>
        <position position="112"/>
    </location>
    <ligand>
        <name>(6S)-5,6,7,8-tetrahydrofolate</name>
        <dbReference type="ChEBI" id="CHEBI:57453"/>
    </ligand>
</feature>
<feature type="binding site" evidence="1">
    <location>
        <begin position="116"/>
        <end position="118"/>
    </location>
    <ligand>
        <name>(6S)-5,6,7,8-tetrahydrofolate</name>
        <dbReference type="ChEBI" id="CHEBI:57453"/>
    </ligand>
</feature>
<feature type="binding site" evidence="1">
    <location>
        <position position="247"/>
    </location>
    <ligand>
        <name>(6S)-5,6,7,8-tetrahydrofolate</name>
        <dbReference type="ChEBI" id="CHEBI:57453"/>
    </ligand>
</feature>
<feature type="site" description="Plays an important role in substrate specificity" evidence="1">
    <location>
        <position position="220"/>
    </location>
</feature>
<feature type="modified residue" description="N6-(pyridoxal phosphate)lysine" evidence="1">
    <location>
        <position position="221"/>
    </location>
</feature>